<sequence length="512" mass="57527">MSEDQDLGITQSKIHNTGEWYAEVVQKAELANYGPEGMSGFIVTRPRAYGLWERVQSYLDTRFKQTGVQNAYFPLFIPEGYLEREKEIVEGFDPEVAWVEQAGRNELEERLAVRPTSESIIAPYLSQWIRSYRDLPLRVNQWTSVVRWEATETKPFFRTKEFLWQEGHTAHATRADAWAETMLRLNQYESTYEDLLAIPVLQGAKPEHDKFPGADTTTTVEALMPDGKSVQGATSHYLGTEFADAFDITYTDTDETSRVAHTTSWGLSWRALGALIMTHSDNQGLVLPPTVAPEQVVIVPIWQTETKERVLEYAEDVANNLDDAGIRVELDDRDDQNPGFKFNEWELKGVPLRAEIGPDEATEGTVTLIHRPDGESITAERSEIVETVQEQFDAVYAKLYAAAEETLNSNIRIAETRSELLGTIGQHGGYVKTPWCGDEGCETAIKDEIAAEIVMVPISSDEDDEQDTTDENMGVNNDTTVESNEKSLDLTDSTCVVCDNPAFKTAYFAKSY</sequence>
<organism>
    <name type="scientific">Haloquadratum walsbyi (strain DSM 16790 / HBSQ001)</name>
    <dbReference type="NCBI Taxonomy" id="362976"/>
    <lineage>
        <taxon>Archaea</taxon>
        <taxon>Methanobacteriati</taxon>
        <taxon>Methanobacteriota</taxon>
        <taxon>Stenosarchaea group</taxon>
        <taxon>Halobacteria</taxon>
        <taxon>Halobacteriales</taxon>
        <taxon>Haloferacaceae</taxon>
        <taxon>Haloquadratum</taxon>
    </lineage>
</organism>
<reference key="1">
    <citation type="journal article" date="2006" name="BMC Genomics">
        <title>The genome of the square archaeon Haloquadratum walsbyi: life at the limits of water activity.</title>
        <authorList>
            <person name="Bolhuis H."/>
            <person name="Palm P."/>
            <person name="Wende A."/>
            <person name="Falb M."/>
            <person name="Rampp M."/>
            <person name="Rodriguez-Valera F."/>
            <person name="Pfeiffer F."/>
            <person name="Oesterhelt D."/>
        </authorList>
    </citation>
    <scope>NUCLEOTIDE SEQUENCE [LARGE SCALE GENOMIC DNA]</scope>
    <source>
        <strain>DSM 16790 / HBSQ001</strain>
    </source>
</reference>
<dbReference type="EC" id="6.1.1.15" evidence="1"/>
<dbReference type="EMBL" id="AM180088">
    <property type="protein sequence ID" value="CAJ51843.1"/>
    <property type="molecule type" value="Genomic_DNA"/>
</dbReference>
<dbReference type="RefSeq" id="WP_011570993.1">
    <property type="nucleotide sequence ID" value="NC_008212.1"/>
</dbReference>
<dbReference type="SMR" id="Q18JG3"/>
<dbReference type="STRING" id="362976.HQ_1715A"/>
<dbReference type="GeneID" id="4194509"/>
<dbReference type="KEGG" id="hwa:HQ_1715A"/>
<dbReference type="eggNOG" id="arCOG00402">
    <property type="taxonomic scope" value="Archaea"/>
</dbReference>
<dbReference type="HOGENOM" id="CLU_001882_4_2_2"/>
<dbReference type="Proteomes" id="UP000001975">
    <property type="component" value="Chromosome"/>
</dbReference>
<dbReference type="GO" id="GO:0017101">
    <property type="term" value="C:aminoacyl-tRNA synthetase multienzyme complex"/>
    <property type="evidence" value="ECO:0007669"/>
    <property type="project" value="TreeGrafter"/>
</dbReference>
<dbReference type="GO" id="GO:0005737">
    <property type="term" value="C:cytoplasm"/>
    <property type="evidence" value="ECO:0007669"/>
    <property type="project" value="UniProtKB-SubCell"/>
</dbReference>
<dbReference type="GO" id="GO:0005524">
    <property type="term" value="F:ATP binding"/>
    <property type="evidence" value="ECO:0007669"/>
    <property type="project" value="UniProtKB-UniRule"/>
</dbReference>
<dbReference type="GO" id="GO:0004827">
    <property type="term" value="F:proline-tRNA ligase activity"/>
    <property type="evidence" value="ECO:0007669"/>
    <property type="project" value="UniProtKB-UniRule"/>
</dbReference>
<dbReference type="GO" id="GO:0006433">
    <property type="term" value="P:prolyl-tRNA aminoacylation"/>
    <property type="evidence" value="ECO:0007669"/>
    <property type="project" value="UniProtKB-UniRule"/>
</dbReference>
<dbReference type="CDD" id="cd00862">
    <property type="entry name" value="ProRS_anticodon_zinc"/>
    <property type="match status" value="1"/>
</dbReference>
<dbReference type="CDD" id="cd00778">
    <property type="entry name" value="ProRS_core_arch_euk"/>
    <property type="match status" value="1"/>
</dbReference>
<dbReference type="FunFam" id="3.40.50.800:FF:000005">
    <property type="entry name" value="bifunctional glutamate/proline--tRNA ligase"/>
    <property type="match status" value="1"/>
</dbReference>
<dbReference type="FunFam" id="3.30.930.10:FF:000037">
    <property type="entry name" value="Proline--tRNA ligase"/>
    <property type="match status" value="1"/>
</dbReference>
<dbReference type="Gene3D" id="3.40.50.800">
    <property type="entry name" value="Anticodon-binding domain"/>
    <property type="match status" value="1"/>
</dbReference>
<dbReference type="Gene3D" id="3.30.930.10">
    <property type="entry name" value="Bira Bifunctional Protein, Domain 2"/>
    <property type="match status" value="1"/>
</dbReference>
<dbReference type="Gene3D" id="3.30.110.30">
    <property type="entry name" value="C-terminal domain of ProRS"/>
    <property type="match status" value="1"/>
</dbReference>
<dbReference type="HAMAP" id="MF_01571">
    <property type="entry name" value="Pro_tRNA_synth_type3"/>
    <property type="match status" value="1"/>
</dbReference>
<dbReference type="InterPro" id="IPR002314">
    <property type="entry name" value="aa-tRNA-synt_IIb"/>
</dbReference>
<dbReference type="InterPro" id="IPR006195">
    <property type="entry name" value="aa-tRNA-synth_II"/>
</dbReference>
<dbReference type="InterPro" id="IPR045864">
    <property type="entry name" value="aa-tRNA-synth_II/BPL/LPL"/>
</dbReference>
<dbReference type="InterPro" id="IPR004154">
    <property type="entry name" value="Anticodon-bd"/>
</dbReference>
<dbReference type="InterPro" id="IPR036621">
    <property type="entry name" value="Anticodon-bd_dom_sf"/>
</dbReference>
<dbReference type="InterPro" id="IPR002316">
    <property type="entry name" value="Pro-tRNA-ligase_IIa"/>
</dbReference>
<dbReference type="InterPro" id="IPR004499">
    <property type="entry name" value="Pro-tRNA-ligase_IIa_arc-type"/>
</dbReference>
<dbReference type="InterPro" id="IPR016061">
    <property type="entry name" value="Pro-tRNA_ligase_II_C"/>
</dbReference>
<dbReference type="InterPro" id="IPR017449">
    <property type="entry name" value="Pro-tRNA_synth_II"/>
</dbReference>
<dbReference type="InterPro" id="IPR033721">
    <property type="entry name" value="ProRS_core_arch_euk"/>
</dbReference>
<dbReference type="NCBIfam" id="TIGR00408">
    <property type="entry name" value="proS_fam_I"/>
    <property type="match status" value="1"/>
</dbReference>
<dbReference type="PANTHER" id="PTHR43382:SF2">
    <property type="entry name" value="BIFUNCTIONAL GLUTAMATE_PROLINE--TRNA LIGASE"/>
    <property type="match status" value="1"/>
</dbReference>
<dbReference type="PANTHER" id="PTHR43382">
    <property type="entry name" value="PROLYL-TRNA SYNTHETASE"/>
    <property type="match status" value="1"/>
</dbReference>
<dbReference type="Pfam" id="PF03129">
    <property type="entry name" value="HGTP_anticodon"/>
    <property type="match status" value="1"/>
</dbReference>
<dbReference type="Pfam" id="PF09180">
    <property type="entry name" value="ProRS-C_1"/>
    <property type="match status" value="1"/>
</dbReference>
<dbReference type="Pfam" id="PF00587">
    <property type="entry name" value="tRNA-synt_2b"/>
    <property type="match status" value="1"/>
</dbReference>
<dbReference type="PRINTS" id="PR01046">
    <property type="entry name" value="TRNASYNTHPRO"/>
</dbReference>
<dbReference type="SMART" id="SM00946">
    <property type="entry name" value="ProRS-C_1"/>
    <property type="match status" value="1"/>
</dbReference>
<dbReference type="SUPFAM" id="SSF64586">
    <property type="entry name" value="C-terminal domain of ProRS"/>
    <property type="match status" value="1"/>
</dbReference>
<dbReference type="SUPFAM" id="SSF52954">
    <property type="entry name" value="Class II aaRS ABD-related"/>
    <property type="match status" value="1"/>
</dbReference>
<dbReference type="SUPFAM" id="SSF55681">
    <property type="entry name" value="Class II aaRS and biotin synthetases"/>
    <property type="match status" value="1"/>
</dbReference>
<dbReference type="PROSITE" id="PS50862">
    <property type="entry name" value="AA_TRNA_LIGASE_II"/>
    <property type="match status" value="1"/>
</dbReference>
<name>SYP_HALWD</name>
<feature type="chain" id="PRO_0000288418" description="Proline--tRNA ligase">
    <location>
        <begin position="1"/>
        <end position="512"/>
    </location>
</feature>
<feature type="region of interest" description="Disordered" evidence="2">
    <location>
        <begin position="460"/>
        <end position="484"/>
    </location>
</feature>
<feature type="compositionally biased region" description="Acidic residues" evidence="2">
    <location>
        <begin position="460"/>
        <end position="470"/>
    </location>
</feature>
<accession>Q18JG3</accession>
<keyword id="KW-0030">Aminoacyl-tRNA synthetase</keyword>
<keyword id="KW-0067">ATP-binding</keyword>
<keyword id="KW-0963">Cytoplasm</keyword>
<keyword id="KW-0436">Ligase</keyword>
<keyword id="KW-0547">Nucleotide-binding</keyword>
<keyword id="KW-0648">Protein biosynthesis</keyword>
<keyword id="KW-1185">Reference proteome</keyword>
<evidence type="ECO:0000255" key="1">
    <source>
        <dbReference type="HAMAP-Rule" id="MF_01571"/>
    </source>
</evidence>
<evidence type="ECO:0000256" key="2">
    <source>
        <dbReference type="SAM" id="MobiDB-lite"/>
    </source>
</evidence>
<gene>
    <name evidence="1" type="primary">proS</name>
    <name type="ordered locus">HQ_1715A</name>
</gene>
<protein>
    <recommendedName>
        <fullName evidence="1">Proline--tRNA ligase</fullName>
        <ecNumber evidence="1">6.1.1.15</ecNumber>
    </recommendedName>
    <alternativeName>
        <fullName evidence="1">Prolyl-tRNA synthetase</fullName>
        <shortName evidence="1">ProRS</shortName>
    </alternativeName>
</protein>
<proteinExistence type="inferred from homology"/>
<comment type="function">
    <text evidence="1">Catalyzes the attachment of proline to tRNA(Pro) in a two-step reaction: proline is first activated by ATP to form Pro-AMP and then transferred to the acceptor end of tRNA(Pro).</text>
</comment>
<comment type="catalytic activity">
    <reaction evidence="1">
        <text>tRNA(Pro) + L-proline + ATP = L-prolyl-tRNA(Pro) + AMP + diphosphate</text>
        <dbReference type="Rhea" id="RHEA:14305"/>
        <dbReference type="Rhea" id="RHEA-COMP:9700"/>
        <dbReference type="Rhea" id="RHEA-COMP:9702"/>
        <dbReference type="ChEBI" id="CHEBI:30616"/>
        <dbReference type="ChEBI" id="CHEBI:33019"/>
        <dbReference type="ChEBI" id="CHEBI:60039"/>
        <dbReference type="ChEBI" id="CHEBI:78442"/>
        <dbReference type="ChEBI" id="CHEBI:78532"/>
        <dbReference type="ChEBI" id="CHEBI:456215"/>
        <dbReference type="EC" id="6.1.1.15"/>
    </reaction>
</comment>
<comment type="subunit">
    <text evidence="1">Homodimer.</text>
</comment>
<comment type="subcellular location">
    <subcellularLocation>
        <location evidence="1">Cytoplasm</location>
    </subcellularLocation>
</comment>
<comment type="domain">
    <text evidence="1">Consists of three domains: the N-terminal catalytic domain, the anticodon-binding domain and the C-terminal extension.</text>
</comment>
<comment type="similarity">
    <text evidence="1">Belongs to the class-II aminoacyl-tRNA synthetase family. ProS type 3 subfamily.</text>
</comment>